<protein>
    <recommendedName>
        <fullName>Uncharacterized lipoprotein MG439 homolog 3</fullName>
    </recommendedName>
</protein>
<dbReference type="EMBL" id="U00089">
    <property type="protein sequence ID" value="AAB95846.1"/>
    <property type="molecule type" value="Genomic_DNA"/>
</dbReference>
<dbReference type="PIR" id="S73524">
    <property type="entry name" value="S73524"/>
</dbReference>
<dbReference type="RefSeq" id="NP_110333.1">
    <property type="nucleotide sequence ID" value="NC_000912.1"/>
</dbReference>
<dbReference type="RefSeq" id="WP_010875001.1">
    <property type="nucleotide sequence ID" value="NZ_OU342337.1"/>
</dbReference>
<dbReference type="IntAct" id="P75153">
    <property type="interactions" value="1"/>
</dbReference>
<dbReference type="STRING" id="272634.MPN_644"/>
<dbReference type="EnsemblBacteria" id="AAB95846">
    <property type="protein sequence ID" value="AAB95846"/>
    <property type="gene ID" value="MPN_644"/>
</dbReference>
<dbReference type="KEGG" id="mpn:MPN_644"/>
<dbReference type="PATRIC" id="fig|272634.6.peg.707"/>
<dbReference type="HOGENOM" id="CLU_080699_0_0_14"/>
<dbReference type="OrthoDB" id="403129at2"/>
<dbReference type="BioCyc" id="MPNE272634:G1GJ3-1028-MONOMER"/>
<dbReference type="Proteomes" id="UP000000808">
    <property type="component" value="Chromosome"/>
</dbReference>
<dbReference type="GO" id="GO:0005886">
    <property type="term" value="C:plasma membrane"/>
    <property type="evidence" value="ECO:0007669"/>
    <property type="project" value="UniProtKB-SubCell"/>
</dbReference>
<dbReference type="InterPro" id="IPR001595">
    <property type="entry name" value="Lipoprotein_3"/>
</dbReference>
<dbReference type="Pfam" id="PF00938">
    <property type="entry name" value="Lipoprotein_3"/>
    <property type="match status" value="1"/>
</dbReference>
<dbReference type="PROSITE" id="PS51257">
    <property type="entry name" value="PROKAR_LIPOPROTEIN"/>
    <property type="match status" value="1"/>
</dbReference>
<reference key="1">
    <citation type="journal article" date="1996" name="Nucleic Acids Res.">
        <title>Complete sequence analysis of the genome of the bacterium Mycoplasma pneumoniae.</title>
        <authorList>
            <person name="Himmelreich R."/>
            <person name="Hilbert H."/>
            <person name="Plagens H."/>
            <person name="Pirkl E."/>
            <person name="Li B.-C."/>
            <person name="Herrmann R."/>
        </authorList>
    </citation>
    <scope>NUCLEOTIDE SEQUENCE [LARGE SCALE GENOMIC DNA]</scope>
    <source>
        <strain>ATCC 29342 / M129 / Subtype 1</strain>
    </source>
</reference>
<proteinExistence type="inferred from homology"/>
<organism>
    <name type="scientific">Mycoplasma pneumoniae (strain ATCC 29342 / M129 / Subtype 1)</name>
    <name type="common">Mycoplasmoides pneumoniae</name>
    <dbReference type="NCBI Taxonomy" id="272634"/>
    <lineage>
        <taxon>Bacteria</taxon>
        <taxon>Bacillati</taxon>
        <taxon>Mycoplasmatota</taxon>
        <taxon>Mycoplasmoidales</taxon>
        <taxon>Mycoplasmoidaceae</taxon>
        <taxon>Mycoplasmoides</taxon>
    </lineage>
</organism>
<name>Y644_MYCPN</name>
<keyword id="KW-1003">Cell membrane</keyword>
<keyword id="KW-0449">Lipoprotein</keyword>
<keyword id="KW-0472">Membrane</keyword>
<keyword id="KW-0564">Palmitate</keyword>
<keyword id="KW-1185">Reference proteome</keyword>
<keyword id="KW-0732">Signal</keyword>
<evidence type="ECO:0000255" key="1">
    <source>
        <dbReference type="PROSITE-ProRule" id="PRU00303"/>
    </source>
</evidence>
<evidence type="ECO:0000305" key="2"/>
<comment type="subcellular location">
    <subcellularLocation>
        <location evidence="1">Cell membrane</location>
        <topology evidence="1">Lipid-anchor</topology>
    </subcellularLocation>
</comment>
<comment type="similarity">
    <text evidence="2">Belongs to the MG439/MG440 family.</text>
</comment>
<feature type="signal peptide" evidence="1">
    <location>
        <begin position="1"/>
        <end position="25"/>
    </location>
</feature>
<feature type="chain" id="PRO_0000014045" description="Uncharacterized lipoprotein MG439 homolog 3">
    <location>
        <begin position="26"/>
        <end position="283"/>
    </location>
</feature>
<feature type="lipid moiety-binding region" description="N-palmitoyl cysteine" evidence="1">
    <location>
        <position position="26"/>
    </location>
</feature>
<feature type="lipid moiety-binding region" description="S-diacylglycerol cysteine" evidence="1">
    <location>
        <position position="26"/>
    </location>
</feature>
<accession>P75153</accession>
<sequence>MNKKRLLFRTPLDALFLLFGTALSACSSTATNVISSLSSAQKYFDAHKSELIKKNVINLLKEGYSTDSKATVNSLFAGWKYTLMDQKILERNLDASRFTKAFGTNKGKDDVIPSISEKGLFLDETYSGVSQQIAKVLGVQSQKVTGFSYSWSSTTNFKVVISFMMQGIVGSGEESNSLIKSFLSSGNNGNVTENDFNNGNANFDGTFIFTFTPPTDGRRFAFSNFDPITGTINFPANLQIDASTTHEKLNILMQNNEHVKKIKSRSFTGKSFDLLPFYFYALL</sequence>
<gene>
    <name type="ordered locus">MPN_644</name>
    <name type="ORF">E09_orf283b</name>
    <name type="ORF">MP198</name>
</gene>